<name>RIMK_SHEHH</name>
<organism>
    <name type="scientific">Shewanella halifaxensis (strain HAW-EB4)</name>
    <dbReference type="NCBI Taxonomy" id="458817"/>
    <lineage>
        <taxon>Bacteria</taxon>
        <taxon>Pseudomonadati</taxon>
        <taxon>Pseudomonadota</taxon>
        <taxon>Gammaproteobacteria</taxon>
        <taxon>Alteromonadales</taxon>
        <taxon>Shewanellaceae</taxon>
        <taxon>Shewanella</taxon>
    </lineage>
</organism>
<gene>
    <name evidence="1" type="primary">rimK</name>
    <name type="ordered locus">Shal_2072</name>
</gene>
<keyword id="KW-0067">ATP-binding</keyword>
<keyword id="KW-0436">Ligase</keyword>
<keyword id="KW-0460">Magnesium</keyword>
<keyword id="KW-0464">Manganese</keyword>
<keyword id="KW-0479">Metal-binding</keyword>
<keyword id="KW-0547">Nucleotide-binding</keyword>
<keyword id="KW-0648">Protein biosynthesis</keyword>
<protein>
    <recommendedName>
        <fullName evidence="1">Probable alpha-L-glutamate ligase</fullName>
        <ecNumber evidence="1">6.3.2.-</ecNumber>
    </recommendedName>
</protein>
<reference key="1">
    <citation type="submission" date="2008-01" db="EMBL/GenBank/DDBJ databases">
        <title>Complete sequence of Shewanella halifaxensis HAW-EB4.</title>
        <authorList>
            <consortium name="US DOE Joint Genome Institute"/>
            <person name="Copeland A."/>
            <person name="Lucas S."/>
            <person name="Lapidus A."/>
            <person name="Glavina del Rio T."/>
            <person name="Dalin E."/>
            <person name="Tice H."/>
            <person name="Bruce D."/>
            <person name="Goodwin L."/>
            <person name="Pitluck S."/>
            <person name="Sims D."/>
            <person name="Brettin T."/>
            <person name="Detter J.C."/>
            <person name="Han C."/>
            <person name="Kuske C.R."/>
            <person name="Schmutz J."/>
            <person name="Larimer F."/>
            <person name="Land M."/>
            <person name="Hauser L."/>
            <person name="Kyrpides N."/>
            <person name="Kim E."/>
            <person name="Zhao J.-S."/>
            <person name="Richardson P."/>
        </authorList>
    </citation>
    <scope>NUCLEOTIDE SEQUENCE [LARGE SCALE GENOMIC DNA]</scope>
    <source>
        <strain>HAW-EB4</strain>
    </source>
</reference>
<feature type="chain" id="PRO_0000340570" description="Probable alpha-L-glutamate ligase">
    <location>
        <begin position="1"/>
        <end position="458"/>
    </location>
</feature>
<feature type="domain" description="ATP-grasp" evidence="1">
    <location>
        <begin position="267"/>
        <end position="450"/>
    </location>
</feature>
<feature type="region of interest" description="Unknown">
    <location>
        <begin position="1"/>
        <end position="162"/>
    </location>
</feature>
<feature type="region of interest" description="Alpha-L-glutamate ligase">
    <location>
        <begin position="163"/>
        <end position="458"/>
    </location>
</feature>
<feature type="binding site" evidence="1">
    <location>
        <position position="304"/>
    </location>
    <ligand>
        <name>ATP</name>
        <dbReference type="ChEBI" id="CHEBI:30616"/>
    </ligand>
</feature>
<feature type="binding site" evidence="1">
    <location>
        <begin position="341"/>
        <end position="342"/>
    </location>
    <ligand>
        <name>ATP</name>
        <dbReference type="ChEBI" id="CHEBI:30616"/>
    </ligand>
</feature>
<feature type="binding site" evidence="1">
    <location>
        <position position="350"/>
    </location>
    <ligand>
        <name>ATP</name>
        <dbReference type="ChEBI" id="CHEBI:30616"/>
    </ligand>
</feature>
<feature type="binding site" evidence="1">
    <location>
        <begin position="374"/>
        <end position="376"/>
    </location>
    <ligand>
        <name>ATP</name>
        <dbReference type="ChEBI" id="CHEBI:30616"/>
    </ligand>
</feature>
<feature type="binding site" evidence="1">
    <location>
        <position position="411"/>
    </location>
    <ligand>
        <name>Mg(2+)</name>
        <dbReference type="ChEBI" id="CHEBI:18420"/>
        <label>1</label>
    </ligand>
</feature>
<feature type="binding site" evidence="1">
    <location>
        <position position="411"/>
    </location>
    <ligand>
        <name>Mn(2+)</name>
        <dbReference type="ChEBI" id="CHEBI:29035"/>
        <label>1</label>
    </ligand>
</feature>
<feature type="binding site" evidence="1">
    <location>
        <position position="423"/>
    </location>
    <ligand>
        <name>Mg(2+)</name>
        <dbReference type="ChEBI" id="CHEBI:18420"/>
        <label>1</label>
    </ligand>
</feature>
<feature type="binding site" evidence="1">
    <location>
        <position position="423"/>
    </location>
    <ligand>
        <name>Mg(2+)</name>
        <dbReference type="ChEBI" id="CHEBI:18420"/>
        <label>2</label>
    </ligand>
</feature>
<feature type="binding site" evidence="1">
    <location>
        <position position="423"/>
    </location>
    <ligand>
        <name>Mn(2+)</name>
        <dbReference type="ChEBI" id="CHEBI:29035"/>
        <label>1</label>
    </ligand>
</feature>
<feature type="binding site" evidence="1">
    <location>
        <position position="423"/>
    </location>
    <ligand>
        <name>Mn(2+)</name>
        <dbReference type="ChEBI" id="CHEBI:29035"/>
        <label>2</label>
    </ligand>
</feature>
<feature type="binding site" evidence="1">
    <location>
        <position position="425"/>
    </location>
    <ligand>
        <name>Mg(2+)</name>
        <dbReference type="ChEBI" id="CHEBI:18420"/>
        <label>2</label>
    </ligand>
</feature>
<feature type="binding site" evidence="1">
    <location>
        <position position="425"/>
    </location>
    <ligand>
        <name>Mn(2+)</name>
        <dbReference type="ChEBI" id="CHEBI:29035"/>
        <label>2</label>
    </ligand>
</feature>
<dbReference type="EC" id="6.3.2.-" evidence="1"/>
<dbReference type="EMBL" id="CP000931">
    <property type="protein sequence ID" value="ABZ76633.1"/>
    <property type="molecule type" value="Genomic_DNA"/>
</dbReference>
<dbReference type="SMR" id="B0TTR5"/>
<dbReference type="STRING" id="458817.Shal_2072"/>
<dbReference type="KEGG" id="shl:Shal_2072"/>
<dbReference type="eggNOG" id="COG0189">
    <property type="taxonomic scope" value="Bacteria"/>
</dbReference>
<dbReference type="eggNOG" id="COG4067">
    <property type="taxonomic scope" value="Bacteria"/>
</dbReference>
<dbReference type="HOGENOM" id="CLU_045509_1_1_6"/>
<dbReference type="Proteomes" id="UP000001317">
    <property type="component" value="Chromosome"/>
</dbReference>
<dbReference type="GO" id="GO:0005737">
    <property type="term" value="C:cytoplasm"/>
    <property type="evidence" value="ECO:0007669"/>
    <property type="project" value="TreeGrafter"/>
</dbReference>
<dbReference type="GO" id="GO:0005524">
    <property type="term" value="F:ATP binding"/>
    <property type="evidence" value="ECO:0007669"/>
    <property type="project" value="UniProtKB-UniRule"/>
</dbReference>
<dbReference type="GO" id="GO:0046872">
    <property type="term" value="F:metal ion binding"/>
    <property type="evidence" value="ECO:0007669"/>
    <property type="project" value="UniProtKB-KW"/>
</dbReference>
<dbReference type="GO" id="GO:0018169">
    <property type="term" value="F:ribosomal S6-glutamic acid ligase activity"/>
    <property type="evidence" value="ECO:0007669"/>
    <property type="project" value="TreeGrafter"/>
</dbReference>
<dbReference type="GO" id="GO:0036211">
    <property type="term" value="P:protein modification process"/>
    <property type="evidence" value="ECO:0007669"/>
    <property type="project" value="InterPro"/>
</dbReference>
<dbReference type="GO" id="GO:0009432">
    <property type="term" value="P:SOS response"/>
    <property type="evidence" value="ECO:0007669"/>
    <property type="project" value="TreeGrafter"/>
</dbReference>
<dbReference type="GO" id="GO:0006412">
    <property type="term" value="P:translation"/>
    <property type="evidence" value="ECO:0007669"/>
    <property type="project" value="UniProtKB-KW"/>
</dbReference>
<dbReference type="FunFam" id="3.30.1490.20:FF:000005">
    <property type="entry name" value="Probable alpha-L-glutamate ligase 1"/>
    <property type="match status" value="1"/>
</dbReference>
<dbReference type="Gene3D" id="3.40.50.20">
    <property type="match status" value="1"/>
</dbReference>
<dbReference type="Gene3D" id="2.40.70.10">
    <property type="entry name" value="Acid Proteases"/>
    <property type="match status" value="1"/>
</dbReference>
<dbReference type="Gene3D" id="3.30.1490.20">
    <property type="entry name" value="ATP-grasp fold, A domain"/>
    <property type="match status" value="1"/>
</dbReference>
<dbReference type="Gene3D" id="3.30.470.20">
    <property type="entry name" value="ATP-grasp fold, B domain"/>
    <property type="match status" value="1"/>
</dbReference>
<dbReference type="HAMAP" id="MF_01552">
    <property type="entry name" value="RimK"/>
    <property type="match status" value="1"/>
</dbReference>
<dbReference type="InterPro" id="IPR011761">
    <property type="entry name" value="ATP-grasp"/>
</dbReference>
<dbReference type="InterPro" id="IPR013651">
    <property type="entry name" value="ATP-grasp_RimK-type"/>
</dbReference>
<dbReference type="InterPro" id="IPR013815">
    <property type="entry name" value="ATP_grasp_subdomain_1"/>
</dbReference>
<dbReference type="InterPro" id="IPR021109">
    <property type="entry name" value="Peptidase_aspartic_dom_sf"/>
</dbReference>
<dbReference type="InterPro" id="IPR008503">
    <property type="entry name" value="Put_Zn_protease"/>
</dbReference>
<dbReference type="InterPro" id="IPR023533">
    <property type="entry name" value="RimK"/>
</dbReference>
<dbReference type="InterPro" id="IPR041107">
    <property type="entry name" value="Rimk_N"/>
</dbReference>
<dbReference type="InterPro" id="IPR004666">
    <property type="entry name" value="Rp_bS6_RimK/Lys_biosynth_LsyX"/>
</dbReference>
<dbReference type="NCBIfam" id="NF007764">
    <property type="entry name" value="PRK10446.1"/>
    <property type="match status" value="1"/>
</dbReference>
<dbReference type="NCBIfam" id="TIGR00768">
    <property type="entry name" value="rimK_fam"/>
    <property type="match status" value="1"/>
</dbReference>
<dbReference type="PANTHER" id="PTHR21621:SF7">
    <property type="entry name" value="RIBOSOMAL PROTEIN BS6--L-GLUTAMATE LIGASE"/>
    <property type="match status" value="1"/>
</dbReference>
<dbReference type="PANTHER" id="PTHR21621">
    <property type="entry name" value="RIBOSOMAL PROTEIN S6 MODIFICATION PROTEIN"/>
    <property type="match status" value="1"/>
</dbReference>
<dbReference type="Pfam" id="PF08443">
    <property type="entry name" value="RimK"/>
    <property type="match status" value="1"/>
</dbReference>
<dbReference type="Pfam" id="PF18030">
    <property type="entry name" value="Rimk_N"/>
    <property type="match status" value="1"/>
</dbReference>
<dbReference type="Pfam" id="PF05618">
    <property type="entry name" value="Zn_protease"/>
    <property type="match status" value="1"/>
</dbReference>
<dbReference type="SUPFAM" id="SSF50630">
    <property type="entry name" value="Acid proteases"/>
    <property type="match status" value="1"/>
</dbReference>
<dbReference type="SUPFAM" id="SSF56059">
    <property type="entry name" value="Glutathione synthetase ATP-binding domain-like"/>
    <property type="match status" value="1"/>
</dbReference>
<dbReference type="PROSITE" id="PS50975">
    <property type="entry name" value="ATP_GRASP"/>
    <property type="match status" value="1"/>
</dbReference>
<comment type="cofactor">
    <cofactor evidence="1">
        <name>Mg(2+)</name>
        <dbReference type="ChEBI" id="CHEBI:18420"/>
    </cofactor>
    <cofactor evidence="1">
        <name>Mn(2+)</name>
        <dbReference type="ChEBI" id="CHEBI:29035"/>
    </cofactor>
    <text evidence="1">Binds 2 magnesium or manganese ions per subunit.</text>
</comment>
<comment type="similarity">
    <text evidence="2">In the C-terminal section; belongs to the RimK family.</text>
</comment>
<accession>B0TTR5</accession>
<evidence type="ECO:0000255" key="1">
    <source>
        <dbReference type="HAMAP-Rule" id="MF_01552"/>
    </source>
</evidence>
<evidence type="ECO:0000305" key="2"/>
<sequence>MSDNKFIIGSEEWCAFPALGVPAIKARVDSGARTSSIHAVNIRPFKREGEPWVSFELHPIQNSRKIILRCESKVIDRRNIKSSNGEIEKRYVIASVIQLGGHAWEVELTLTNRDSMGYRMLLGREAMSNKTLVDPSESFCLGQQNDVEVEQLYGVKSAKKSGLKIGLLASNPDLYSNRRIIEAGEQRGHEMVFLNIKQCYLKLDASEPEVHYRGGRILNDLDAVIPRIRPSMTFYGCALTRHFESLNIMALNTSDAITRSRDKLFSLQLLQKNNLDIPTSGFANSPVDTKDLIDMVGGAPLIVKLLEGTQGKGVVLAETTKAAESVINAFKSLHVNLLVQEFIKEAQGKDLRCFVIDGKVVASIERTAAPGEFRANIHQGGSASIVSVSAAERQLALKAAKTMGLRVAGVDIIRSSRGPLLLEINSSPGLEGIESATGIDIAGAMIDSIEKKLGWKAE</sequence>
<proteinExistence type="inferred from homology"/>